<proteinExistence type="inferred from homology"/>
<sequence length="446" mass="49598">MSIDINWEAATSGPDGEALAERIRSFIHDKFQQIALPRFIRSVEVNSFDFGTIKPELQIKDLCDPFEDFYEEDEDNEIGDGEVSDIQDRSPKPRPSSAGNERSAADAWQAEHPAFLDDRLCGRIEPHDVPIPSKEDPLASRPIRSPMSFGDPLNPYFFPRAGTPGIPGGTSNLGYYYMPLGGISGTQTPLSSVPRGPFSPGLRDASVFGEPSNSQRPNPSGPARRQSEIDIDTGNSRPSTADTLDSLNIHGIPDPVLPRSSDDAHPNVLPRRDNSPAPRRVREKRPEDLQVLCRLRYNGNIRLSLTALVLLDYPMPNFVGLPLKLNITGLTFDGVAVVAYIRKRVHFCFLSPEDADTLFGADDTNEAGHLQSRDSLAGGINDTSYSSRRPHDSLLRDVRVESEIGRKEDGKQVLKNVGKVEKFVLEQVRRIFEEEFVYPSFWTFLV</sequence>
<gene>
    <name evidence="1" type="primary">MDM12</name>
    <name type="ORF">CIMG_03262</name>
</gene>
<reference key="1">
    <citation type="journal article" date="2009" name="Genome Res.">
        <title>Comparative genomic analyses of the human fungal pathogens Coccidioides and their relatives.</title>
        <authorList>
            <person name="Sharpton T.J."/>
            <person name="Stajich J.E."/>
            <person name="Rounsley S.D."/>
            <person name="Gardner M.J."/>
            <person name="Wortman J.R."/>
            <person name="Jordar V.S."/>
            <person name="Maiti R."/>
            <person name="Kodira C.D."/>
            <person name="Neafsey D.E."/>
            <person name="Zeng Q."/>
            <person name="Hung C.-Y."/>
            <person name="McMahan C."/>
            <person name="Muszewska A."/>
            <person name="Grynberg M."/>
            <person name="Mandel M.A."/>
            <person name="Kellner E.M."/>
            <person name="Barker B.M."/>
            <person name="Galgiani J.N."/>
            <person name="Orbach M.J."/>
            <person name="Kirkland T.N."/>
            <person name="Cole G.T."/>
            <person name="Henn M.R."/>
            <person name="Birren B.W."/>
            <person name="Taylor J.W."/>
        </authorList>
    </citation>
    <scope>NUCLEOTIDE SEQUENCE [LARGE SCALE GENOMIC DNA]</scope>
    <source>
        <strain>RS</strain>
    </source>
</reference>
<reference key="2">
    <citation type="journal article" date="2010" name="Genome Res.">
        <title>Population genomic sequencing of Coccidioides fungi reveals recent hybridization and transposon control.</title>
        <authorList>
            <person name="Neafsey D.E."/>
            <person name="Barker B.M."/>
            <person name="Sharpton T.J."/>
            <person name="Stajich J.E."/>
            <person name="Park D.J."/>
            <person name="Whiston E."/>
            <person name="Hung C.-Y."/>
            <person name="McMahan C."/>
            <person name="White J."/>
            <person name="Sykes S."/>
            <person name="Heiman D."/>
            <person name="Young S."/>
            <person name="Zeng Q."/>
            <person name="Abouelleil A."/>
            <person name="Aftuck L."/>
            <person name="Bessette D."/>
            <person name="Brown A."/>
            <person name="FitzGerald M."/>
            <person name="Lui A."/>
            <person name="Macdonald J.P."/>
            <person name="Priest M."/>
            <person name="Orbach M.J."/>
            <person name="Galgiani J.N."/>
            <person name="Kirkland T.N."/>
            <person name="Cole G.T."/>
            <person name="Birren B.W."/>
            <person name="Henn M.R."/>
            <person name="Taylor J.W."/>
            <person name="Rounsley S.D."/>
        </authorList>
    </citation>
    <scope>GENOME REANNOTATION</scope>
    <source>
        <strain>RS</strain>
    </source>
</reference>
<feature type="chain" id="PRO_0000384283" description="Mitochondrial distribution and morphology protein 12">
    <location>
        <begin position="1"/>
        <end position="446"/>
    </location>
</feature>
<feature type="domain" description="SMP-LTD" evidence="1">
    <location>
        <begin position="1"/>
        <end position="446"/>
    </location>
</feature>
<feature type="region of interest" description="Disordered" evidence="2">
    <location>
        <begin position="75"/>
        <end position="106"/>
    </location>
</feature>
<feature type="region of interest" description="Disordered" evidence="2">
    <location>
        <begin position="126"/>
        <end position="145"/>
    </location>
</feature>
<feature type="region of interest" description="Disordered" evidence="2">
    <location>
        <begin position="188"/>
        <end position="283"/>
    </location>
</feature>
<feature type="compositionally biased region" description="Acidic residues" evidence="2">
    <location>
        <begin position="75"/>
        <end position="85"/>
    </location>
</feature>
<feature type="compositionally biased region" description="Basic and acidic residues" evidence="2">
    <location>
        <begin position="126"/>
        <end position="138"/>
    </location>
</feature>
<feature type="compositionally biased region" description="Polar residues" evidence="2">
    <location>
        <begin position="233"/>
        <end position="246"/>
    </location>
</feature>
<feature type="compositionally biased region" description="Basic and acidic residues" evidence="2">
    <location>
        <begin position="260"/>
        <end position="274"/>
    </location>
</feature>
<comment type="function">
    <text evidence="1">Component of the ERMES/MDM complex, which serves as a molecular tether to connect the endoplasmic reticulum (ER) and mitochondria. Components of this complex are involved in the control of mitochondrial shape and protein biogenesis, and function in nonvesicular lipid trafficking between the ER and mitochondria. MDM12 is required for the interaction of the ER-resident membrane protein MMM1 and the outer mitochondrial membrane-resident beta-barrel protein MDM10. The MDM12-MMM1 subcomplex functions in the major beta-barrel assembly pathway that is responsible for biogenesis of all mitochondrial outer membrane beta-barrel proteins, and acts in a late step after the SAM complex. The MDM10-MDM12-MMM1 subcomplex further acts in the TOM40-specific pathway after the action of the MDM12-MMM1 complex. Essential for establishing and maintaining the structure of mitochondria and maintenance of mtDNA nucleoids.</text>
</comment>
<comment type="subunit">
    <text evidence="1">Component of the ER-mitochondria encounter structure (ERMES) or MDM complex, composed of MMM1, MDM10, MDM12 and MDM34. A MMM1 homodimer associates with one molecule of MDM12 on each side in a pairwise head-to-tail manner, and the SMP-LTD domains of MMM1 and MDM12 generate a continuous hydrophobic tunnel for phospholipid trafficking.</text>
</comment>
<comment type="subcellular location">
    <subcellularLocation>
        <location evidence="1">Mitochondrion outer membrane</location>
        <topology evidence="1">Peripheral membrane protein</topology>
        <orientation evidence="1">Cytoplasmic side</orientation>
    </subcellularLocation>
    <subcellularLocation>
        <location evidence="1">Endoplasmic reticulum membrane</location>
        <topology evidence="1">Peripheral membrane protein</topology>
        <orientation evidence="1">Cytoplasmic side</orientation>
    </subcellularLocation>
    <text evidence="1">The ERMES/MDM complex localizes to a few discrete foci (around 10 per single cell), that represent mitochondria-endoplasmic reticulum junctions. These foci are often found next to mtDNA nucleoids.</text>
</comment>
<comment type="domain">
    <text evidence="1">The SMP-LTD domain is a barrel-like domain that can bind various types of glycerophospholipids in its interior and mediate their transfer between two adjacent bilayers.</text>
</comment>
<comment type="similarity">
    <text evidence="1">Belongs to the MDM12 family.</text>
</comment>
<dbReference type="EMBL" id="GG704916">
    <property type="protein sequence ID" value="EAS32238.3"/>
    <property type="molecule type" value="Genomic_DNA"/>
</dbReference>
<dbReference type="RefSeq" id="XP_001243821.1">
    <property type="nucleotide sequence ID" value="XM_001243820.2"/>
</dbReference>
<dbReference type="FunCoup" id="Q1E2F1">
    <property type="interactions" value="46"/>
</dbReference>
<dbReference type="STRING" id="246410.Q1E2F1"/>
<dbReference type="GeneID" id="4564643"/>
<dbReference type="KEGG" id="cim:CIMG_03262"/>
<dbReference type="VEuPathDB" id="FungiDB:CIMG_03262"/>
<dbReference type="InParanoid" id="Q1E2F1"/>
<dbReference type="OMA" id="KRAHFCF"/>
<dbReference type="OrthoDB" id="3356905at2759"/>
<dbReference type="Proteomes" id="UP000001261">
    <property type="component" value="Unassembled WGS sequence"/>
</dbReference>
<dbReference type="GO" id="GO:0005789">
    <property type="term" value="C:endoplasmic reticulum membrane"/>
    <property type="evidence" value="ECO:0007669"/>
    <property type="project" value="UniProtKB-SubCell"/>
</dbReference>
<dbReference type="GO" id="GO:0032865">
    <property type="term" value="C:ERMES complex"/>
    <property type="evidence" value="ECO:0007669"/>
    <property type="project" value="UniProtKB-UniRule"/>
</dbReference>
<dbReference type="GO" id="GO:0008289">
    <property type="term" value="F:lipid binding"/>
    <property type="evidence" value="ECO:0007669"/>
    <property type="project" value="UniProtKB-KW"/>
</dbReference>
<dbReference type="GO" id="GO:0000002">
    <property type="term" value="P:mitochondrial genome maintenance"/>
    <property type="evidence" value="ECO:0007669"/>
    <property type="project" value="UniProtKB-UniRule"/>
</dbReference>
<dbReference type="GO" id="GO:1990456">
    <property type="term" value="P:mitochondrion-endoplasmic reticulum membrane tethering"/>
    <property type="evidence" value="ECO:0007669"/>
    <property type="project" value="TreeGrafter"/>
</dbReference>
<dbReference type="GO" id="GO:0015914">
    <property type="term" value="P:phospholipid transport"/>
    <property type="evidence" value="ECO:0007669"/>
    <property type="project" value="TreeGrafter"/>
</dbReference>
<dbReference type="GO" id="GO:0045040">
    <property type="term" value="P:protein insertion into mitochondrial outer membrane"/>
    <property type="evidence" value="ECO:0007669"/>
    <property type="project" value="UniProtKB-UniRule"/>
</dbReference>
<dbReference type="CDD" id="cd21672">
    <property type="entry name" value="SMP_Mdm12"/>
    <property type="match status" value="1"/>
</dbReference>
<dbReference type="HAMAP" id="MF_03104">
    <property type="entry name" value="Mdm12"/>
    <property type="match status" value="1"/>
</dbReference>
<dbReference type="InterPro" id="IPR027532">
    <property type="entry name" value="Mdm12"/>
</dbReference>
<dbReference type="InterPro" id="IPR019411">
    <property type="entry name" value="MMM1_dom"/>
</dbReference>
<dbReference type="InterPro" id="IPR031468">
    <property type="entry name" value="SMP_LBD"/>
</dbReference>
<dbReference type="PANTHER" id="PTHR28204">
    <property type="entry name" value="MITOCHONDRIAL DISTRIBUTION AND MORPHOLOGY PROTEIN 12"/>
    <property type="match status" value="1"/>
</dbReference>
<dbReference type="PANTHER" id="PTHR28204:SF1">
    <property type="entry name" value="MITOCHONDRIAL DISTRIBUTION AND MORPHOLOGY PROTEIN 12"/>
    <property type="match status" value="1"/>
</dbReference>
<dbReference type="Pfam" id="PF10296">
    <property type="entry name" value="MMM1"/>
    <property type="match status" value="1"/>
</dbReference>
<dbReference type="PROSITE" id="PS51847">
    <property type="entry name" value="SMP"/>
    <property type="match status" value="1"/>
</dbReference>
<organism>
    <name type="scientific">Coccidioides immitis (strain RS)</name>
    <name type="common">Valley fever fungus</name>
    <dbReference type="NCBI Taxonomy" id="246410"/>
    <lineage>
        <taxon>Eukaryota</taxon>
        <taxon>Fungi</taxon>
        <taxon>Dikarya</taxon>
        <taxon>Ascomycota</taxon>
        <taxon>Pezizomycotina</taxon>
        <taxon>Eurotiomycetes</taxon>
        <taxon>Eurotiomycetidae</taxon>
        <taxon>Onygenales</taxon>
        <taxon>Onygenaceae</taxon>
        <taxon>Coccidioides</taxon>
    </lineage>
</organism>
<evidence type="ECO:0000255" key="1">
    <source>
        <dbReference type="HAMAP-Rule" id="MF_03104"/>
    </source>
</evidence>
<evidence type="ECO:0000256" key="2">
    <source>
        <dbReference type="SAM" id="MobiDB-lite"/>
    </source>
</evidence>
<name>MDM12_COCIM</name>
<accession>Q1E2F1</accession>
<accession>J3KB73</accession>
<keyword id="KW-0256">Endoplasmic reticulum</keyword>
<keyword id="KW-0445">Lipid transport</keyword>
<keyword id="KW-0446">Lipid-binding</keyword>
<keyword id="KW-0472">Membrane</keyword>
<keyword id="KW-0496">Mitochondrion</keyword>
<keyword id="KW-1000">Mitochondrion outer membrane</keyword>
<keyword id="KW-1185">Reference proteome</keyword>
<keyword id="KW-0813">Transport</keyword>
<protein>
    <recommendedName>
        <fullName evidence="1">Mitochondrial distribution and morphology protein 12</fullName>
    </recommendedName>
    <alternativeName>
        <fullName evidence="1">Mitochondrial inheritance component MDM12</fullName>
    </alternativeName>
</protein>